<comment type="function">
    <text evidence="1">Part of a membrane-bound complex that couples electron transfer with translocation of ions across the membrane.</text>
</comment>
<comment type="subunit">
    <text evidence="1">The complex is composed of six subunits: RnfA, RnfB, RnfC, RnfD, RnfE and RnfG.</text>
</comment>
<comment type="subcellular location">
    <subcellularLocation>
        <location evidence="1">Cell inner membrane</location>
        <topology evidence="1">Multi-pass membrane protein</topology>
    </subcellularLocation>
</comment>
<comment type="similarity">
    <text evidence="1">Belongs to the NqrDE/RnfAE family.</text>
</comment>
<protein>
    <recommendedName>
        <fullName evidence="1">Ion-translocating oxidoreductase complex subunit A</fullName>
        <ecNumber evidence="1">7.-.-.-</ecNumber>
    </recommendedName>
    <alternativeName>
        <fullName evidence="1">Rnf electron transport complex subunit A</fullName>
    </alternativeName>
</protein>
<organism>
    <name type="scientific">Azoarcus sp. (strain BH72)</name>
    <dbReference type="NCBI Taxonomy" id="418699"/>
    <lineage>
        <taxon>Bacteria</taxon>
        <taxon>Pseudomonadati</taxon>
        <taxon>Pseudomonadota</taxon>
        <taxon>Betaproteobacteria</taxon>
        <taxon>Rhodocyclales</taxon>
        <taxon>Zoogloeaceae</taxon>
        <taxon>Azoarcus</taxon>
    </lineage>
</organism>
<reference key="1">
    <citation type="journal article" date="2006" name="Nat. Biotechnol.">
        <title>Complete genome of the mutualistic, N2-fixing grass endophyte Azoarcus sp. strain BH72.</title>
        <authorList>
            <person name="Krause A."/>
            <person name="Ramakumar A."/>
            <person name="Bartels D."/>
            <person name="Battistoni F."/>
            <person name="Bekel T."/>
            <person name="Boch J."/>
            <person name="Boehm M."/>
            <person name="Friedrich F."/>
            <person name="Hurek T."/>
            <person name="Krause L."/>
            <person name="Linke B."/>
            <person name="McHardy A.C."/>
            <person name="Sarkar A."/>
            <person name="Schneiker S."/>
            <person name="Syed A.A."/>
            <person name="Thauer R."/>
            <person name="Vorhoelter F.-J."/>
            <person name="Weidner S."/>
            <person name="Puehler A."/>
            <person name="Reinhold-Hurek B."/>
            <person name="Kaiser O."/>
            <person name="Goesmann A."/>
        </authorList>
    </citation>
    <scope>NUCLEOTIDE SEQUENCE [LARGE SCALE GENOMIC DNA]</scope>
    <source>
        <strain>BH72</strain>
    </source>
</reference>
<dbReference type="EC" id="7.-.-.-" evidence="1"/>
<dbReference type="EMBL" id="AM406670">
    <property type="protein sequence ID" value="CAL93134.1"/>
    <property type="molecule type" value="Genomic_DNA"/>
</dbReference>
<dbReference type="RefSeq" id="WP_011764252.1">
    <property type="nucleotide sequence ID" value="NC_008702.1"/>
</dbReference>
<dbReference type="SMR" id="A1K2S9"/>
<dbReference type="STRING" id="62928.azo0517"/>
<dbReference type="KEGG" id="aoa:dqs_0527"/>
<dbReference type="KEGG" id="azo:azo0517"/>
<dbReference type="eggNOG" id="COG4657">
    <property type="taxonomic scope" value="Bacteria"/>
</dbReference>
<dbReference type="HOGENOM" id="CLU_095255_1_0_4"/>
<dbReference type="OrthoDB" id="9803631at2"/>
<dbReference type="BRENDA" id="7.1.1.11">
    <property type="organism ID" value="15971"/>
</dbReference>
<dbReference type="Proteomes" id="UP000002588">
    <property type="component" value="Chromosome"/>
</dbReference>
<dbReference type="GO" id="GO:0005886">
    <property type="term" value="C:plasma membrane"/>
    <property type="evidence" value="ECO:0007669"/>
    <property type="project" value="UniProtKB-SubCell"/>
</dbReference>
<dbReference type="GO" id="GO:0022900">
    <property type="term" value="P:electron transport chain"/>
    <property type="evidence" value="ECO:0007669"/>
    <property type="project" value="UniProtKB-UniRule"/>
</dbReference>
<dbReference type="HAMAP" id="MF_00459">
    <property type="entry name" value="RsxA_RnfA"/>
    <property type="match status" value="1"/>
</dbReference>
<dbReference type="InterPro" id="IPR011293">
    <property type="entry name" value="Ion_transpt_RnfA/RsxA"/>
</dbReference>
<dbReference type="InterPro" id="IPR003667">
    <property type="entry name" value="NqrDE/RnfAE"/>
</dbReference>
<dbReference type="InterPro" id="IPR050133">
    <property type="entry name" value="NqrDE/RnfAE_oxidrdctase"/>
</dbReference>
<dbReference type="NCBIfam" id="NF003481">
    <property type="entry name" value="PRK05151.1"/>
    <property type="match status" value="1"/>
</dbReference>
<dbReference type="NCBIfam" id="TIGR01943">
    <property type="entry name" value="rnfA"/>
    <property type="match status" value="1"/>
</dbReference>
<dbReference type="PANTHER" id="PTHR30335">
    <property type="entry name" value="INTEGRAL MEMBRANE PROTEIN OF SOXR-REDUCING COMPLEX"/>
    <property type="match status" value="1"/>
</dbReference>
<dbReference type="PANTHER" id="PTHR30335:SF0">
    <property type="entry name" value="ION-TRANSLOCATING OXIDOREDUCTASE COMPLEX SUBUNIT A"/>
    <property type="match status" value="1"/>
</dbReference>
<dbReference type="Pfam" id="PF02508">
    <property type="entry name" value="Rnf-Nqr"/>
    <property type="match status" value="1"/>
</dbReference>
<dbReference type="PIRSF" id="PIRSF006102">
    <property type="entry name" value="NQR_DE"/>
    <property type="match status" value="1"/>
</dbReference>
<keyword id="KW-0997">Cell inner membrane</keyword>
<keyword id="KW-1003">Cell membrane</keyword>
<keyword id="KW-0249">Electron transport</keyword>
<keyword id="KW-0472">Membrane</keyword>
<keyword id="KW-1185">Reference proteome</keyword>
<keyword id="KW-1278">Translocase</keyword>
<keyword id="KW-0812">Transmembrane</keyword>
<keyword id="KW-1133">Transmembrane helix</keyword>
<keyword id="KW-0813">Transport</keyword>
<proteinExistence type="inferred from homology"/>
<sequence length="193" mass="20536">MSEWLMLLLGTALVNNVVLVKFLGLCPFMGVSKKVDSAIGMGMATTFVLTLASALTWLIEHFLLVPFDFGYLRILSFILVIAATVQFVEMVIKKTAPDLYKVLGIYLPLITTNCAVLGVALLNAGEGAGFVRSVLYGFGSALGFTMVMVLFAGLRERLALTSVPAAFSGAPISFITAGLLSLAFMGFAGLTNH</sequence>
<evidence type="ECO:0000255" key="1">
    <source>
        <dbReference type="HAMAP-Rule" id="MF_00459"/>
    </source>
</evidence>
<feature type="chain" id="PRO_1000191709" description="Ion-translocating oxidoreductase complex subunit A">
    <location>
        <begin position="1"/>
        <end position="193"/>
    </location>
</feature>
<feature type="transmembrane region" description="Helical" evidence="1">
    <location>
        <begin position="5"/>
        <end position="25"/>
    </location>
</feature>
<feature type="transmembrane region" description="Helical" evidence="1">
    <location>
        <begin position="39"/>
        <end position="59"/>
    </location>
</feature>
<feature type="transmembrane region" description="Helical" evidence="1">
    <location>
        <begin position="62"/>
        <end position="82"/>
    </location>
</feature>
<feature type="transmembrane region" description="Helical" evidence="1">
    <location>
        <begin position="102"/>
        <end position="122"/>
    </location>
</feature>
<feature type="transmembrane region" description="Helical" evidence="1">
    <location>
        <begin position="134"/>
        <end position="154"/>
    </location>
</feature>
<feature type="transmembrane region" description="Helical" evidence="1">
    <location>
        <begin position="170"/>
        <end position="190"/>
    </location>
</feature>
<gene>
    <name evidence="1" type="primary">rnfA</name>
    <name type="ordered locus">azo0517</name>
</gene>
<accession>A1K2S9</accession>
<name>RNFA_AZOSB</name>